<keyword id="KW-0004">4Fe-4S</keyword>
<keyword id="KW-0408">Iron</keyword>
<keyword id="KW-0411">Iron-sulfur</keyword>
<keyword id="KW-0414">Isoprene biosynthesis</keyword>
<keyword id="KW-0479">Metal-binding</keyword>
<keyword id="KW-0560">Oxidoreductase</keyword>
<sequence length="380" mass="40809">MSIDLGLPKVREVLSPRRKTRRIKLGKVFVGGDSPILVQSMTTTQTTNIDATLQQIAELTAAGCDIVRVAVPSRDDAQVLHIIAKKSQIPVIADIHFQPNYVYAAIDAGCAAVRVNPGNIRKFDDQIGKIAEKAKAAGVSIRIGVNAGSLDPRLLEKYGRPTAQALVDSAVWEAGLFEEYDFHDFKISVKHHDPVTMVKAYRLLAERGDWPLHLGVTEAGPAFQGTIKSSTAFAVLLAEGIGDTIRVSLSAPPVEEVKVGLEILRSLGLRERRLEIVSCPSCGRAQVDVYRLAEEVTKGLEKLTVPLRVAVMGCIVNGPGEAREADLGVASGNGKGQIFVRGQVIKTVPESEIVPTLLEEANRLAGEMPFSSGSPTIAIV</sequence>
<proteinExistence type="inferred from homology"/>
<gene>
    <name evidence="1" type="primary">ispG</name>
    <name type="ordered locus">TW586</name>
</gene>
<accession>Q83NE4</accession>
<feature type="chain" id="PRO_0000190649" description="4-hydroxy-3-methylbut-2-en-1-yl diphosphate synthase (flavodoxin)">
    <location>
        <begin position="1"/>
        <end position="380"/>
    </location>
</feature>
<feature type="binding site" evidence="1">
    <location>
        <position position="279"/>
    </location>
    <ligand>
        <name>[4Fe-4S] cluster</name>
        <dbReference type="ChEBI" id="CHEBI:49883"/>
    </ligand>
</feature>
<feature type="binding site" evidence="1">
    <location>
        <position position="282"/>
    </location>
    <ligand>
        <name>[4Fe-4S] cluster</name>
        <dbReference type="ChEBI" id="CHEBI:49883"/>
    </ligand>
</feature>
<feature type="binding site" evidence="1">
    <location>
        <position position="314"/>
    </location>
    <ligand>
        <name>[4Fe-4S] cluster</name>
        <dbReference type="ChEBI" id="CHEBI:49883"/>
    </ligand>
</feature>
<feature type="binding site" evidence="1">
    <location>
        <position position="321"/>
    </location>
    <ligand>
        <name>[4Fe-4S] cluster</name>
        <dbReference type="ChEBI" id="CHEBI:49883"/>
    </ligand>
</feature>
<protein>
    <recommendedName>
        <fullName evidence="1">4-hydroxy-3-methylbut-2-en-1-yl diphosphate synthase (flavodoxin)</fullName>
        <ecNumber evidence="1">1.17.7.3</ecNumber>
    </recommendedName>
    <alternativeName>
        <fullName evidence="1">1-hydroxy-2-methyl-2-(E)-butenyl 4-diphosphate synthase</fullName>
    </alternativeName>
</protein>
<reference key="1">
    <citation type="journal article" date="2003" name="Lancet">
        <title>Sequencing and analysis of the genome of the Whipple's disease bacterium Tropheryma whipplei.</title>
        <authorList>
            <person name="Bentley S.D."/>
            <person name="Maiwald M."/>
            <person name="Murphy L.D."/>
            <person name="Pallen M.J."/>
            <person name="Yeats C.A."/>
            <person name="Dover L.G."/>
            <person name="Norbertczak H.T."/>
            <person name="Besra G.S."/>
            <person name="Quail M.A."/>
            <person name="Harris D.E."/>
            <person name="von Herbay A."/>
            <person name="Goble A."/>
            <person name="Rutter S."/>
            <person name="Squares R."/>
            <person name="Squares S."/>
            <person name="Barrell B.G."/>
            <person name="Parkhill J."/>
            <person name="Relman D.A."/>
        </authorList>
    </citation>
    <scope>NUCLEOTIDE SEQUENCE [LARGE SCALE GENOMIC DNA]</scope>
    <source>
        <strain>TW08/27</strain>
    </source>
</reference>
<organism>
    <name type="scientific">Tropheryma whipplei (strain TW08/27)</name>
    <name type="common">Whipple's bacillus</name>
    <dbReference type="NCBI Taxonomy" id="218496"/>
    <lineage>
        <taxon>Bacteria</taxon>
        <taxon>Bacillati</taxon>
        <taxon>Actinomycetota</taxon>
        <taxon>Actinomycetes</taxon>
        <taxon>Micrococcales</taxon>
        <taxon>Tropherymataceae</taxon>
        <taxon>Tropheryma</taxon>
    </lineage>
</organism>
<comment type="function">
    <text evidence="1">Converts 2C-methyl-D-erythritol 2,4-cyclodiphosphate (ME-2,4cPP) into 1-hydroxy-2-methyl-2-(E)-butenyl 4-diphosphate.</text>
</comment>
<comment type="catalytic activity">
    <reaction evidence="1">
        <text>(2E)-4-hydroxy-3-methylbut-2-enyl diphosphate + oxidized [flavodoxin] + H2O + 2 H(+) = 2-C-methyl-D-erythritol 2,4-cyclic diphosphate + reduced [flavodoxin]</text>
        <dbReference type="Rhea" id="RHEA:43604"/>
        <dbReference type="Rhea" id="RHEA-COMP:10622"/>
        <dbReference type="Rhea" id="RHEA-COMP:10623"/>
        <dbReference type="ChEBI" id="CHEBI:15377"/>
        <dbReference type="ChEBI" id="CHEBI:15378"/>
        <dbReference type="ChEBI" id="CHEBI:57618"/>
        <dbReference type="ChEBI" id="CHEBI:58210"/>
        <dbReference type="ChEBI" id="CHEBI:58483"/>
        <dbReference type="ChEBI" id="CHEBI:128753"/>
        <dbReference type="EC" id="1.17.7.3"/>
    </reaction>
</comment>
<comment type="cofactor">
    <cofactor evidence="1">
        <name>[4Fe-4S] cluster</name>
        <dbReference type="ChEBI" id="CHEBI:49883"/>
    </cofactor>
    <text evidence="1">Binds 1 [4Fe-4S] cluster.</text>
</comment>
<comment type="pathway">
    <text evidence="1">Isoprenoid biosynthesis; isopentenyl diphosphate biosynthesis via DXP pathway; isopentenyl diphosphate from 1-deoxy-D-xylulose 5-phosphate: step 5/6.</text>
</comment>
<comment type="similarity">
    <text evidence="1">Belongs to the IspG family.</text>
</comment>
<dbReference type="EC" id="1.17.7.3" evidence="1"/>
<dbReference type="EMBL" id="BX251412">
    <property type="protein sequence ID" value="CAD67252.1"/>
    <property type="molecule type" value="Genomic_DNA"/>
</dbReference>
<dbReference type="SMR" id="Q83NE4"/>
<dbReference type="KEGG" id="tws:TW586"/>
<dbReference type="HOGENOM" id="CLU_042258_0_0_11"/>
<dbReference type="UniPathway" id="UPA00056">
    <property type="reaction ID" value="UER00096"/>
</dbReference>
<dbReference type="GO" id="GO:0051539">
    <property type="term" value="F:4 iron, 4 sulfur cluster binding"/>
    <property type="evidence" value="ECO:0007669"/>
    <property type="project" value="UniProtKB-UniRule"/>
</dbReference>
<dbReference type="GO" id="GO:0046429">
    <property type="term" value="F:4-hydroxy-3-methylbut-2-en-1-yl diphosphate synthase activity (ferredoxin)"/>
    <property type="evidence" value="ECO:0007669"/>
    <property type="project" value="UniProtKB-UniRule"/>
</dbReference>
<dbReference type="GO" id="GO:0141197">
    <property type="term" value="F:4-hydroxy-3-methylbut-2-enyl-diphosphate synthase activity (flavodoxin)"/>
    <property type="evidence" value="ECO:0007669"/>
    <property type="project" value="UniProtKB-EC"/>
</dbReference>
<dbReference type="GO" id="GO:0005506">
    <property type="term" value="F:iron ion binding"/>
    <property type="evidence" value="ECO:0007669"/>
    <property type="project" value="InterPro"/>
</dbReference>
<dbReference type="GO" id="GO:0019288">
    <property type="term" value="P:isopentenyl diphosphate biosynthetic process, methylerythritol 4-phosphate pathway"/>
    <property type="evidence" value="ECO:0007669"/>
    <property type="project" value="UniProtKB-UniRule"/>
</dbReference>
<dbReference type="GO" id="GO:0016114">
    <property type="term" value="P:terpenoid biosynthetic process"/>
    <property type="evidence" value="ECO:0007669"/>
    <property type="project" value="InterPro"/>
</dbReference>
<dbReference type="FunFam" id="3.20.20.20:FF:000001">
    <property type="entry name" value="4-hydroxy-3-methylbut-2-en-1-yl diphosphate synthase (flavodoxin)"/>
    <property type="match status" value="1"/>
</dbReference>
<dbReference type="Gene3D" id="3.20.20.20">
    <property type="entry name" value="Dihydropteroate synthase-like"/>
    <property type="match status" value="1"/>
</dbReference>
<dbReference type="Gene3D" id="3.30.413.10">
    <property type="entry name" value="Sulfite Reductase Hemoprotein, domain 1"/>
    <property type="match status" value="1"/>
</dbReference>
<dbReference type="HAMAP" id="MF_00159">
    <property type="entry name" value="IspG"/>
    <property type="match status" value="1"/>
</dbReference>
<dbReference type="InterPro" id="IPR011005">
    <property type="entry name" value="Dihydropteroate_synth-like_sf"/>
</dbReference>
<dbReference type="InterPro" id="IPR016425">
    <property type="entry name" value="IspG_bac"/>
</dbReference>
<dbReference type="InterPro" id="IPR004588">
    <property type="entry name" value="IspG_bac-typ"/>
</dbReference>
<dbReference type="InterPro" id="IPR045854">
    <property type="entry name" value="NO2/SO3_Rdtase_4Fe4S_sf"/>
</dbReference>
<dbReference type="NCBIfam" id="TIGR00612">
    <property type="entry name" value="ispG_gcpE"/>
    <property type="match status" value="1"/>
</dbReference>
<dbReference type="NCBIfam" id="NF001540">
    <property type="entry name" value="PRK00366.1"/>
    <property type="match status" value="1"/>
</dbReference>
<dbReference type="PANTHER" id="PTHR30454">
    <property type="entry name" value="4-HYDROXY-3-METHYLBUT-2-EN-1-YL DIPHOSPHATE SYNTHASE"/>
    <property type="match status" value="1"/>
</dbReference>
<dbReference type="PANTHER" id="PTHR30454:SF0">
    <property type="entry name" value="4-HYDROXY-3-METHYLBUT-2-EN-1-YL DIPHOSPHATE SYNTHASE (FERREDOXIN), CHLOROPLASTIC"/>
    <property type="match status" value="1"/>
</dbReference>
<dbReference type="Pfam" id="PF04551">
    <property type="entry name" value="GcpE"/>
    <property type="match status" value="1"/>
</dbReference>
<dbReference type="PIRSF" id="PIRSF004640">
    <property type="entry name" value="IspG"/>
    <property type="match status" value="1"/>
</dbReference>
<dbReference type="SUPFAM" id="SSF51717">
    <property type="entry name" value="Dihydropteroate synthetase-like"/>
    <property type="match status" value="1"/>
</dbReference>
<dbReference type="SUPFAM" id="SSF56014">
    <property type="entry name" value="Nitrite and sulphite reductase 4Fe-4S domain-like"/>
    <property type="match status" value="1"/>
</dbReference>
<name>ISPG_TROW8</name>
<evidence type="ECO:0000255" key="1">
    <source>
        <dbReference type="HAMAP-Rule" id="MF_00159"/>
    </source>
</evidence>